<accession>A4QS18</accession>
<accession>G4N8K6</accession>
<name>FEN1_PYRO7</name>
<comment type="function">
    <text evidence="1">Structure-specific nuclease with 5'-flap endonuclease and 5'-3' exonuclease activities involved in DNA replication and repair. During DNA replication, cleaves the 5'-overhanging flap structure that is generated by displacement synthesis when DNA polymerase encounters the 5'-end of a downstream Okazaki fragment. It enters the flap from the 5'-end and then tracks to cleave the flap base, leaving a nick for ligation. Also involved in the long patch base excision repair (LP-BER) pathway, by cleaving within the apurinic/apyrimidinic (AP) site-terminated flap. Acts as a genome stabilization factor that prevents flaps from equilibrating into structures that lead to duplications and deletions. Also possesses 5'-3' exonuclease activity on nicked or gapped double-stranded DNA, and exhibits RNase H activity. Also involved in replication and repair of rDNA and in repairing mitochondrial DNA.</text>
</comment>
<comment type="cofactor">
    <cofactor evidence="1">
        <name>Mg(2+)</name>
        <dbReference type="ChEBI" id="CHEBI:18420"/>
    </cofactor>
    <text evidence="1">Binds 2 magnesium ions per subunit. They probably participate in the reaction catalyzed by the enzyme. May bind an additional third magnesium ion after substrate binding.</text>
</comment>
<comment type="subunit">
    <text evidence="1">Interacts with PCNA. Three molecules of FEN1 bind to one PCNA trimer with each molecule binding to one PCNA monomer. PCNA stimulates the nuclease activity without altering cleavage specificity.</text>
</comment>
<comment type="subcellular location">
    <subcellularLocation>
        <location evidence="1">Nucleus</location>
        <location evidence="1">Nucleolus</location>
    </subcellularLocation>
    <subcellularLocation>
        <location evidence="1">Nucleus</location>
        <location evidence="1">Nucleoplasm</location>
    </subcellularLocation>
    <subcellularLocation>
        <location evidence="1">Mitochondrion</location>
    </subcellularLocation>
    <text evidence="1">Resides mostly in the nucleoli and relocalizes to the nucleoplasm upon DNA damage.</text>
</comment>
<comment type="PTM">
    <text evidence="1">Phosphorylated. Phosphorylation upon DNA damage induces relocalization to the nuclear plasma.</text>
</comment>
<comment type="similarity">
    <text evidence="1">Belongs to the XPG/RAD2 endonuclease family. FEN1 subfamily.</text>
</comment>
<keyword id="KW-0227">DNA damage</keyword>
<keyword id="KW-0234">DNA repair</keyword>
<keyword id="KW-0235">DNA replication</keyword>
<keyword id="KW-0255">Endonuclease</keyword>
<keyword id="KW-0269">Exonuclease</keyword>
<keyword id="KW-0378">Hydrolase</keyword>
<keyword id="KW-0460">Magnesium</keyword>
<keyword id="KW-0479">Metal-binding</keyword>
<keyword id="KW-0496">Mitochondrion</keyword>
<keyword id="KW-0540">Nuclease</keyword>
<keyword id="KW-0539">Nucleus</keyword>
<keyword id="KW-0597">Phosphoprotein</keyword>
<keyword id="KW-1185">Reference proteome</keyword>
<feature type="chain" id="PRO_0000403584" description="Flap endonuclease 1">
    <location>
        <begin position="1"/>
        <end position="394"/>
    </location>
</feature>
<feature type="region of interest" description="N-domain">
    <location>
        <begin position="1"/>
        <end position="104"/>
    </location>
</feature>
<feature type="region of interest" description="I-domain">
    <location>
        <begin position="122"/>
        <end position="253"/>
    </location>
</feature>
<feature type="region of interest" description="Interaction with PCNA" evidence="1">
    <location>
        <begin position="340"/>
        <end position="348"/>
    </location>
</feature>
<feature type="region of interest" description="Disordered" evidence="2">
    <location>
        <begin position="358"/>
        <end position="394"/>
    </location>
</feature>
<feature type="compositionally biased region" description="Basic residues" evidence="2">
    <location>
        <begin position="374"/>
        <end position="394"/>
    </location>
</feature>
<feature type="binding site" evidence="1">
    <location>
        <position position="34"/>
    </location>
    <ligand>
        <name>Mg(2+)</name>
        <dbReference type="ChEBI" id="CHEBI:18420"/>
        <label>1</label>
    </ligand>
</feature>
<feature type="binding site" evidence="1">
    <location>
        <position position="47"/>
    </location>
    <ligand>
        <name>DNA</name>
        <dbReference type="ChEBI" id="CHEBI:16991"/>
    </ligand>
</feature>
<feature type="binding site" evidence="1">
    <location>
        <position position="70"/>
    </location>
    <ligand>
        <name>DNA</name>
        <dbReference type="ChEBI" id="CHEBI:16991"/>
    </ligand>
</feature>
<feature type="binding site" evidence="1">
    <location>
        <position position="86"/>
    </location>
    <ligand>
        <name>Mg(2+)</name>
        <dbReference type="ChEBI" id="CHEBI:18420"/>
        <label>1</label>
    </ligand>
</feature>
<feature type="binding site" evidence="1">
    <location>
        <position position="158"/>
    </location>
    <ligand>
        <name>DNA</name>
        <dbReference type="ChEBI" id="CHEBI:16991"/>
    </ligand>
</feature>
<feature type="binding site" evidence="1">
    <location>
        <position position="158"/>
    </location>
    <ligand>
        <name>Mg(2+)</name>
        <dbReference type="ChEBI" id="CHEBI:18420"/>
        <label>1</label>
    </ligand>
</feature>
<feature type="binding site" evidence="1">
    <location>
        <position position="160"/>
    </location>
    <ligand>
        <name>Mg(2+)</name>
        <dbReference type="ChEBI" id="CHEBI:18420"/>
        <label>1</label>
    </ligand>
</feature>
<feature type="binding site" evidence="1">
    <location>
        <position position="179"/>
    </location>
    <ligand>
        <name>Mg(2+)</name>
        <dbReference type="ChEBI" id="CHEBI:18420"/>
        <label>2</label>
    </ligand>
</feature>
<feature type="binding site" evidence="1">
    <location>
        <position position="181"/>
    </location>
    <ligand>
        <name>Mg(2+)</name>
        <dbReference type="ChEBI" id="CHEBI:18420"/>
        <label>2</label>
    </ligand>
</feature>
<feature type="binding site" evidence="1">
    <location>
        <position position="231"/>
    </location>
    <ligand>
        <name>DNA</name>
        <dbReference type="ChEBI" id="CHEBI:16991"/>
    </ligand>
</feature>
<feature type="binding site" evidence="1">
    <location>
        <position position="233"/>
    </location>
    <ligand>
        <name>DNA</name>
        <dbReference type="ChEBI" id="CHEBI:16991"/>
    </ligand>
</feature>
<feature type="binding site" evidence="1">
    <location>
        <position position="233"/>
    </location>
    <ligand>
        <name>Mg(2+)</name>
        <dbReference type="ChEBI" id="CHEBI:18420"/>
        <label>2</label>
    </ligand>
</feature>
<evidence type="ECO:0000255" key="1">
    <source>
        <dbReference type="HAMAP-Rule" id="MF_03140"/>
    </source>
</evidence>
<evidence type="ECO:0000256" key="2">
    <source>
        <dbReference type="SAM" id="MobiDB-lite"/>
    </source>
</evidence>
<reference key="1">
    <citation type="journal article" date="2005" name="Nature">
        <title>The genome sequence of the rice blast fungus Magnaporthe grisea.</title>
        <authorList>
            <person name="Dean R.A."/>
            <person name="Talbot N.J."/>
            <person name="Ebbole D.J."/>
            <person name="Farman M.L."/>
            <person name="Mitchell T.K."/>
            <person name="Orbach M.J."/>
            <person name="Thon M.R."/>
            <person name="Kulkarni R."/>
            <person name="Xu J.-R."/>
            <person name="Pan H."/>
            <person name="Read N.D."/>
            <person name="Lee Y.-H."/>
            <person name="Carbone I."/>
            <person name="Brown D."/>
            <person name="Oh Y.Y."/>
            <person name="Donofrio N."/>
            <person name="Jeong J.S."/>
            <person name="Soanes D.M."/>
            <person name="Djonovic S."/>
            <person name="Kolomiets E."/>
            <person name="Rehmeyer C."/>
            <person name="Li W."/>
            <person name="Harding M."/>
            <person name="Kim S."/>
            <person name="Lebrun M.-H."/>
            <person name="Bohnert H."/>
            <person name="Coughlan S."/>
            <person name="Butler J."/>
            <person name="Calvo S.E."/>
            <person name="Ma L.-J."/>
            <person name="Nicol R."/>
            <person name="Purcell S."/>
            <person name="Nusbaum C."/>
            <person name="Galagan J.E."/>
            <person name="Birren B.W."/>
        </authorList>
    </citation>
    <scope>NUCLEOTIDE SEQUENCE [LARGE SCALE GENOMIC DNA]</scope>
    <source>
        <strain>70-15 / ATCC MYA-4617 / FGSC 8958</strain>
    </source>
</reference>
<protein>
    <recommendedName>
        <fullName evidence="1">Flap endonuclease 1</fullName>
        <shortName evidence="1">FEN-1</shortName>
        <ecNumber evidence="1">3.1.-.-</ecNumber>
    </recommendedName>
    <alternativeName>
        <fullName evidence="1">Flap structure-specific endonuclease 1</fullName>
    </alternativeName>
</protein>
<organism>
    <name type="scientific">Pyricularia oryzae (strain 70-15 / ATCC MYA-4617 / FGSC 8958)</name>
    <name type="common">Rice blast fungus</name>
    <name type="synonym">Magnaporthe oryzae</name>
    <dbReference type="NCBI Taxonomy" id="242507"/>
    <lineage>
        <taxon>Eukaryota</taxon>
        <taxon>Fungi</taxon>
        <taxon>Dikarya</taxon>
        <taxon>Ascomycota</taxon>
        <taxon>Pezizomycotina</taxon>
        <taxon>Sordariomycetes</taxon>
        <taxon>Sordariomycetidae</taxon>
        <taxon>Magnaporthales</taxon>
        <taxon>Pyriculariaceae</taxon>
        <taxon>Pyricularia</taxon>
    </lineage>
</organism>
<dbReference type="EC" id="3.1.-.-" evidence="1"/>
<dbReference type="EMBL" id="CM001234">
    <property type="protein sequence ID" value="EHA50200.1"/>
    <property type="molecule type" value="Genomic_DNA"/>
</dbReference>
<dbReference type="RefSeq" id="XP_003716519.1">
    <property type="nucleotide sequence ID" value="XM_003716471.1"/>
</dbReference>
<dbReference type="SMR" id="A4QS18"/>
<dbReference type="FunCoup" id="A4QS18">
    <property type="interactions" value="1035"/>
</dbReference>
<dbReference type="STRING" id="242507.A4QS18"/>
<dbReference type="EnsemblFungi" id="MGG_03419T0">
    <property type="protein sequence ID" value="MGG_03419T0"/>
    <property type="gene ID" value="MGG_03419"/>
</dbReference>
<dbReference type="GeneID" id="2676517"/>
<dbReference type="KEGG" id="mgr:MGG_03419"/>
<dbReference type="VEuPathDB" id="FungiDB:MGG_03419"/>
<dbReference type="eggNOG" id="KOG2519">
    <property type="taxonomic scope" value="Eukaryota"/>
</dbReference>
<dbReference type="HOGENOM" id="CLU_032444_1_1_1"/>
<dbReference type="InParanoid" id="A4QS18"/>
<dbReference type="OMA" id="MGIPWVQ"/>
<dbReference type="OrthoDB" id="1937206at2759"/>
<dbReference type="Proteomes" id="UP000009058">
    <property type="component" value="Chromosome 4"/>
</dbReference>
<dbReference type="GO" id="GO:0005739">
    <property type="term" value="C:mitochondrion"/>
    <property type="evidence" value="ECO:0007669"/>
    <property type="project" value="UniProtKB-SubCell"/>
</dbReference>
<dbReference type="GO" id="GO:0005730">
    <property type="term" value="C:nucleolus"/>
    <property type="evidence" value="ECO:0007669"/>
    <property type="project" value="UniProtKB-SubCell"/>
</dbReference>
<dbReference type="GO" id="GO:0005654">
    <property type="term" value="C:nucleoplasm"/>
    <property type="evidence" value="ECO:0007669"/>
    <property type="project" value="UniProtKB-SubCell"/>
</dbReference>
<dbReference type="GO" id="GO:0008409">
    <property type="term" value="F:5'-3' exonuclease activity"/>
    <property type="evidence" value="ECO:0007669"/>
    <property type="project" value="UniProtKB-UniRule"/>
</dbReference>
<dbReference type="GO" id="GO:0017108">
    <property type="term" value="F:5'-flap endonuclease activity"/>
    <property type="evidence" value="ECO:0007669"/>
    <property type="project" value="UniProtKB-UniRule"/>
</dbReference>
<dbReference type="GO" id="GO:0003677">
    <property type="term" value="F:DNA binding"/>
    <property type="evidence" value="ECO:0007669"/>
    <property type="project" value="UniProtKB-UniRule"/>
</dbReference>
<dbReference type="GO" id="GO:0000287">
    <property type="term" value="F:magnesium ion binding"/>
    <property type="evidence" value="ECO:0007669"/>
    <property type="project" value="UniProtKB-UniRule"/>
</dbReference>
<dbReference type="GO" id="GO:0006284">
    <property type="term" value="P:base-excision repair"/>
    <property type="evidence" value="ECO:0007669"/>
    <property type="project" value="UniProtKB-UniRule"/>
</dbReference>
<dbReference type="GO" id="GO:0043137">
    <property type="term" value="P:DNA replication, removal of RNA primer"/>
    <property type="evidence" value="ECO:0007669"/>
    <property type="project" value="UniProtKB-UniRule"/>
</dbReference>
<dbReference type="CDD" id="cd09907">
    <property type="entry name" value="H3TH_FEN1-Euk"/>
    <property type="match status" value="1"/>
</dbReference>
<dbReference type="CDD" id="cd09867">
    <property type="entry name" value="PIN_FEN1"/>
    <property type="match status" value="1"/>
</dbReference>
<dbReference type="FunFam" id="1.10.150.20:FF:000009">
    <property type="entry name" value="Flap endonuclease 1"/>
    <property type="match status" value="1"/>
</dbReference>
<dbReference type="FunFam" id="3.40.50.1010:FF:000003">
    <property type="entry name" value="Flap endonuclease 1"/>
    <property type="match status" value="1"/>
</dbReference>
<dbReference type="Gene3D" id="1.10.150.20">
    <property type="entry name" value="5' to 3' exonuclease, C-terminal subdomain"/>
    <property type="match status" value="1"/>
</dbReference>
<dbReference type="Gene3D" id="3.40.50.1010">
    <property type="entry name" value="5'-nuclease"/>
    <property type="match status" value="1"/>
</dbReference>
<dbReference type="HAMAP" id="MF_00614">
    <property type="entry name" value="Fen"/>
    <property type="match status" value="1"/>
</dbReference>
<dbReference type="InterPro" id="IPR036279">
    <property type="entry name" value="5-3_exonuclease_C_sf"/>
</dbReference>
<dbReference type="InterPro" id="IPR023426">
    <property type="entry name" value="Flap_endonuc"/>
</dbReference>
<dbReference type="InterPro" id="IPR008918">
    <property type="entry name" value="HhH2"/>
</dbReference>
<dbReference type="InterPro" id="IPR029060">
    <property type="entry name" value="PIN-like_dom_sf"/>
</dbReference>
<dbReference type="InterPro" id="IPR006086">
    <property type="entry name" value="XPG-I_dom"/>
</dbReference>
<dbReference type="InterPro" id="IPR006084">
    <property type="entry name" value="XPG/Rad2"/>
</dbReference>
<dbReference type="InterPro" id="IPR019974">
    <property type="entry name" value="XPG_CS"/>
</dbReference>
<dbReference type="InterPro" id="IPR006085">
    <property type="entry name" value="XPG_DNA_repair_N"/>
</dbReference>
<dbReference type="PANTHER" id="PTHR11081:SF9">
    <property type="entry name" value="FLAP ENDONUCLEASE 1"/>
    <property type="match status" value="1"/>
</dbReference>
<dbReference type="PANTHER" id="PTHR11081">
    <property type="entry name" value="FLAP ENDONUCLEASE FAMILY MEMBER"/>
    <property type="match status" value="1"/>
</dbReference>
<dbReference type="Pfam" id="PF00867">
    <property type="entry name" value="XPG_I"/>
    <property type="match status" value="1"/>
</dbReference>
<dbReference type="Pfam" id="PF00752">
    <property type="entry name" value="XPG_N"/>
    <property type="match status" value="1"/>
</dbReference>
<dbReference type="PRINTS" id="PR00853">
    <property type="entry name" value="XPGRADSUPER"/>
</dbReference>
<dbReference type="SMART" id="SM00279">
    <property type="entry name" value="HhH2"/>
    <property type="match status" value="1"/>
</dbReference>
<dbReference type="SMART" id="SM00484">
    <property type="entry name" value="XPGI"/>
    <property type="match status" value="1"/>
</dbReference>
<dbReference type="SMART" id="SM00485">
    <property type="entry name" value="XPGN"/>
    <property type="match status" value="1"/>
</dbReference>
<dbReference type="SUPFAM" id="SSF47807">
    <property type="entry name" value="5' to 3' exonuclease, C-terminal subdomain"/>
    <property type="match status" value="1"/>
</dbReference>
<dbReference type="SUPFAM" id="SSF88723">
    <property type="entry name" value="PIN domain-like"/>
    <property type="match status" value="1"/>
</dbReference>
<dbReference type="PROSITE" id="PS00841">
    <property type="entry name" value="XPG_1"/>
    <property type="match status" value="1"/>
</dbReference>
<dbReference type="PROSITE" id="PS00842">
    <property type="entry name" value="XPG_2"/>
    <property type="match status" value="1"/>
</dbReference>
<gene>
    <name evidence="1" type="primary">FEN1</name>
    <name type="ORF">MGG_03419</name>
</gene>
<sequence length="394" mass="44559">MGIKQLFTIIKENAPAAIKTGEIKNQFGRKVAIDASMSIYSFLIAVRSNGEMLTNEDGQTTSHLMGMFYRTLRMVDNGIKPLYVFDGAPPKLKSGELARRYQRKQEALEGLEEARETGTAEDVEKFSRRTVRVTREHNEECRQLLKLMGIPYIIAPTEAEAQCAVLARAGKVFAAASEDMDTLCFDSPILLRHLTFSEARKEPIQEIHVDKVLEGLDMDRKQFVDLCILLGCDYLDPIPKVGPSTALKLIREHGSLETIVEKMKKGELKYTVPEDWPFEDARDLFFNPAVHPADHPDCNFKWEKPDVEGLVKYLVTEKGFSEDRVRPGALRLEKALGTSQQQRLEGFFKPVARTAEEQKAHKRKLEVKAEEAKKKLKAEKKEKAKAKARPRGTA</sequence>
<proteinExistence type="inferred from homology"/>